<evidence type="ECO:0000250" key="1"/>
<evidence type="ECO:0000255" key="2">
    <source>
        <dbReference type="HAMAP-Rule" id="MF_00100"/>
    </source>
</evidence>
<evidence type="ECO:0000256" key="3">
    <source>
        <dbReference type="SAM" id="MobiDB-lite"/>
    </source>
</evidence>
<name>IF2_STRS7</name>
<comment type="function">
    <text evidence="2">One of the essential components for the initiation of protein synthesis. Protects formylmethionyl-tRNA from spontaneous hydrolysis and promotes its binding to the 30S ribosomal subunits. Also involved in the hydrolysis of GTP during the formation of the 70S ribosomal complex.</text>
</comment>
<comment type="subcellular location">
    <subcellularLocation>
        <location evidence="2">Cytoplasm</location>
    </subcellularLocation>
</comment>
<comment type="similarity">
    <text evidence="2">Belongs to the TRAFAC class translation factor GTPase superfamily. Classic translation factor GTPase family. IF-2 subfamily.</text>
</comment>
<keyword id="KW-0963">Cytoplasm</keyword>
<keyword id="KW-0342">GTP-binding</keyword>
<keyword id="KW-0396">Initiation factor</keyword>
<keyword id="KW-0547">Nucleotide-binding</keyword>
<keyword id="KW-0648">Protein biosynthesis</keyword>
<sequence>MSKKRLHEIAKEIGKSSKEVVERAKSLGLDVKSHASSVEEADANKIASSFSAGVTKNVQAGSAKDKQVAEQKAKAAKATTPQPAASKAAEKPAAATQEASQPVAVKPKSRNFKAEREARAKEQVARRQAGQNRSNDRKSDYRQLGRSQGQQTERAGHKSQNQQRDRRFDNRPSSGNNRNDGHRQAGNRDKNRSFNANSRQQDIGRQGQTQAGAPKIDFKARAAALKAEQNAEYARQRESRFREQEEAKRLEQQARQEAKAAALKAQTEDKKHREAPAKATEPAEPVASMAAAPVAKPVDKRRKKQNRPDKAHDRDHGLEDGQKKNKKSWNSQNQVRNQKNSNWNNNKKNKKGKHHKNSNTAPKPVTERKFHELPKEFEYSEGMTVAEIAKRIKREPAEIVKKLFMMGVMATQNQSLDGDTIELLMVDYGIEAKAKVEVDEADIERFFTDDNYLNPDNIVERAPVVTIMGHVDHGKTTLLDTLRNSRVATGEAGGITQHIGAYQIEEAGKKITFLDTPGHAAFTSMRARGASVTDITILIVAADDGVMPQTIEAINHSKAAGVPIIVAINKIDKPGANPERVISELAEHGIISTTWGGECEFVEISAKFNKNIDELLETVLLVAEVEELKADPTVRAIGTVIEARLDKGKGAVATLLVQQGTLHVQDPIVVGNTFGRVRAMTNDLGRRVKSAEPSTPVSITGLNETPMAGDHFAVYADEKAARAAGEERAKRALLKQRQNTQRVSLDNLFDTLKAGEIKTVNVIIKADVQGSVEALAASLLKIDVEGVRVNVVHSAVGAINESDVTLAEASNAVIIGFNVRPTPQARQQADADDVEIRLHSIIYKVIEEVEEAMKGKLDPEYQEKVLGEAIIRETFKVSKVGTIGGFMVVNGKVTRDSSVRVIRDSVVIFDGKLASLKHYKDDVKEIGNAQEGGLMIEGFNDIKVDDTIEAYVMEEIIRK</sequence>
<protein>
    <recommendedName>
        <fullName evidence="2">Translation initiation factor IF-2</fullName>
    </recommendedName>
</protein>
<proteinExistence type="inferred from homology"/>
<feature type="chain" id="PRO_1000202784" description="Translation initiation factor IF-2">
    <location>
        <begin position="1"/>
        <end position="959"/>
    </location>
</feature>
<feature type="domain" description="tr-type G">
    <location>
        <begin position="460"/>
        <end position="629"/>
    </location>
</feature>
<feature type="region of interest" description="Disordered" evidence="3">
    <location>
        <begin position="33"/>
        <end position="373"/>
    </location>
</feature>
<feature type="region of interest" description="G1" evidence="1">
    <location>
        <begin position="469"/>
        <end position="476"/>
    </location>
</feature>
<feature type="region of interest" description="G2" evidence="1">
    <location>
        <begin position="494"/>
        <end position="498"/>
    </location>
</feature>
<feature type="region of interest" description="G3" evidence="1">
    <location>
        <begin position="515"/>
        <end position="518"/>
    </location>
</feature>
<feature type="region of interest" description="G4" evidence="1">
    <location>
        <begin position="569"/>
        <end position="572"/>
    </location>
</feature>
<feature type="region of interest" description="G5" evidence="1">
    <location>
        <begin position="605"/>
        <end position="607"/>
    </location>
</feature>
<feature type="compositionally biased region" description="Polar residues" evidence="3">
    <location>
        <begin position="46"/>
        <end position="60"/>
    </location>
</feature>
<feature type="compositionally biased region" description="Basic and acidic residues" evidence="3">
    <location>
        <begin position="63"/>
        <end position="73"/>
    </location>
</feature>
<feature type="compositionally biased region" description="Low complexity" evidence="3">
    <location>
        <begin position="76"/>
        <end position="100"/>
    </location>
</feature>
<feature type="compositionally biased region" description="Basic and acidic residues" evidence="3">
    <location>
        <begin position="112"/>
        <end position="125"/>
    </location>
</feature>
<feature type="compositionally biased region" description="Basic and acidic residues" evidence="3">
    <location>
        <begin position="134"/>
        <end position="143"/>
    </location>
</feature>
<feature type="compositionally biased region" description="Basic and acidic residues" evidence="3">
    <location>
        <begin position="179"/>
        <end position="192"/>
    </location>
</feature>
<feature type="compositionally biased region" description="Polar residues" evidence="3">
    <location>
        <begin position="193"/>
        <end position="211"/>
    </location>
</feature>
<feature type="compositionally biased region" description="Basic and acidic residues" evidence="3">
    <location>
        <begin position="234"/>
        <end position="258"/>
    </location>
</feature>
<feature type="compositionally biased region" description="Basic and acidic residues" evidence="3">
    <location>
        <begin position="266"/>
        <end position="276"/>
    </location>
</feature>
<feature type="compositionally biased region" description="Low complexity" evidence="3">
    <location>
        <begin position="277"/>
        <end position="287"/>
    </location>
</feature>
<feature type="compositionally biased region" description="Basic and acidic residues" evidence="3">
    <location>
        <begin position="306"/>
        <end position="323"/>
    </location>
</feature>
<feature type="compositionally biased region" description="Low complexity" evidence="3">
    <location>
        <begin position="328"/>
        <end position="346"/>
    </location>
</feature>
<feature type="compositionally biased region" description="Basic residues" evidence="3">
    <location>
        <begin position="347"/>
        <end position="357"/>
    </location>
</feature>
<feature type="binding site" evidence="2">
    <location>
        <begin position="469"/>
        <end position="476"/>
    </location>
    <ligand>
        <name>GTP</name>
        <dbReference type="ChEBI" id="CHEBI:37565"/>
    </ligand>
</feature>
<feature type="binding site" evidence="2">
    <location>
        <begin position="515"/>
        <end position="519"/>
    </location>
    <ligand>
        <name>GTP</name>
        <dbReference type="ChEBI" id="CHEBI:37565"/>
    </ligand>
</feature>
<feature type="binding site" evidence="2">
    <location>
        <begin position="569"/>
        <end position="572"/>
    </location>
    <ligand>
        <name>GTP</name>
        <dbReference type="ChEBI" id="CHEBI:37565"/>
    </ligand>
</feature>
<dbReference type="EMBL" id="FM204884">
    <property type="protein sequence ID" value="CAX00225.1"/>
    <property type="molecule type" value="Genomic_DNA"/>
</dbReference>
<dbReference type="SMR" id="C0MDY5"/>
<dbReference type="KEGG" id="seq:SZO_15380"/>
<dbReference type="PATRIC" id="fig|40041.11.peg.1651"/>
<dbReference type="eggNOG" id="COG0532">
    <property type="taxonomic scope" value="Bacteria"/>
</dbReference>
<dbReference type="HOGENOM" id="CLU_006301_5_0_9"/>
<dbReference type="Proteomes" id="UP000001368">
    <property type="component" value="Chromosome"/>
</dbReference>
<dbReference type="GO" id="GO:0005829">
    <property type="term" value="C:cytosol"/>
    <property type="evidence" value="ECO:0007669"/>
    <property type="project" value="TreeGrafter"/>
</dbReference>
<dbReference type="GO" id="GO:0005525">
    <property type="term" value="F:GTP binding"/>
    <property type="evidence" value="ECO:0007669"/>
    <property type="project" value="UniProtKB-KW"/>
</dbReference>
<dbReference type="GO" id="GO:0003924">
    <property type="term" value="F:GTPase activity"/>
    <property type="evidence" value="ECO:0007669"/>
    <property type="project" value="UniProtKB-UniRule"/>
</dbReference>
<dbReference type="GO" id="GO:0003743">
    <property type="term" value="F:translation initiation factor activity"/>
    <property type="evidence" value="ECO:0007669"/>
    <property type="project" value="UniProtKB-UniRule"/>
</dbReference>
<dbReference type="CDD" id="cd01887">
    <property type="entry name" value="IF2_eIF5B"/>
    <property type="match status" value="1"/>
</dbReference>
<dbReference type="CDD" id="cd03702">
    <property type="entry name" value="IF2_mtIF2_II"/>
    <property type="match status" value="1"/>
</dbReference>
<dbReference type="CDD" id="cd03692">
    <property type="entry name" value="mtIF2_IVc"/>
    <property type="match status" value="1"/>
</dbReference>
<dbReference type="FunFam" id="2.40.30.10:FF:000007">
    <property type="entry name" value="Translation initiation factor IF-2"/>
    <property type="match status" value="1"/>
</dbReference>
<dbReference type="FunFam" id="2.40.30.10:FF:000008">
    <property type="entry name" value="Translation initiation factor IF-2"/>
    <property type="match status" value="1"/>
</dbReference>
<dbReference type="FunFam" id="3.40.50.10050:FF:000001">
    <property type="entry name" value="Translation initiation factor IF-2"/>
    <property type="match status" value="1"/>
</dbReference>
<dbReference type="FunFam" id="3.40.50.300:FF:000019">
    <property type="entry name" value="Translation initiation factor IF-2"/>
    <property type="match status" value="1"/>
</dbReference>
<dbReference type="Gene3D" id="1.10.10.2480">
    <property type="match status" value="1"/>
</dbReference>
<dbReference type="Gene3D" id="3.40.50.300">
    <property type="entry name" value="P-loop containing nucleotide triphosphate hydrolases"/>
    <property type="match status" value="1"/>
</dbReference>
<dbReference type="Gene3D" id="2.40.30.10">
    <property type="entry name" value="Translation factors"/>
    <property type="match status" value="2"/>
</dbReference>
<dbReference type="Gene3D" id="3.40.50.10050">
    <property type="entry name" value="Translation initiation factor IF- 2, domain 3"/>
    <property type="match status" value="1"/>
</dbReference>
<dbReference type="HAMAP" id="MF_00100_B">
    <property type="entry name" value="IF_2_B"/>
    <property type="match status" value="1"/>
</dbReference>
<dbReference type="InterPro" id="IPR053905">
    <property type="entry name" value="EF-G-like_DII"/>
</dbReference>
<dbReference type="InterPro" id="IPR044145">
    <property type="entry name" value="IF2_II"/>
</dbReference>
<dbReference type="InterPro" id="IPR006847">
    <property type="entry name" value="IF2_N"/>
</dbReference>
<dbReference type="InterPro" id="IPR027417">
    <property type="entry name" value="P-loop_NTPase"/>
</dbReference>
<dbReference type="InterPro" id="IPR005225">
    <property type="entry name" value="Small_GTP-bd"/>
</dbReference>
<dbReference type="InterPro" id="IPR000795">
    <property type="entry name" value="T_Tr_GTP-bd_dom"/>
</dbReference>
<dbReference type="InterPro" id="IPR000178">
    <property type="entry name" value="TF_IF2_bacterial-like"/>
</dbReference>
<dbReference type="InterPro" id="IPR015760">
    <property type="entry name" value="TIF_IF2"/>
</dbReference>
<dbReference type="InterPro" id="IPR023115">
    <property type="entry name" value="TIF_IF2_dom3"/>
</dbReference>
<dbReference type="InterPro" id="IPR036925">
    <property type="entry name" value="TIF_IF2_dom3_sf"/>
</dbReference>
<dbReference type="InterPro" id="IPR009000">
    <property type="entry name" value="Transl_B-barrel_sf"/>
</dbReference>
<dbReference type="NCBIfam" id="TIGR00487">
    <property type="entry name" value="IF-2"/>
    <property type="match status" value="1"/>
</dbReference>
<dbReference type="NCBIfam" id="TIGR00231">
    <property type="entry name" value="small_GTP"/>
    <property type="match status" value="1"/>
</dbReference>
<dbReference type="PANTHER" id="PTHR43381:SF5">
    <property type="entry name" value="TR-TYPE G DOMAIN-CONTAINING PROTEIN"/>
    <property type="match status" value="1"/>
</dbReference>
<dbReference type="PANTHER" id="PTHR43381">
    <property type="entry name" value="TRANSLATION INITIATION FACTOR IF-2-RELATED"/>
    <property type="match status" value="1"/>
</dbReference>
<dbReference type="Pfam" id="PF22042">
    <property type="entry name" value="EF-G_D2"/>
    <property type="match status" value="1"/>
</dbReference>
<dbReference type="Pfam" id="PF00009">
    <property type="entry name" value="GTP_EFTU"/>
    <property type="match status" value="1"/>
</dbReference>
<dbReference type="Pfam" id="PF11987">
    <property type="entry name" value="IF-2"/>
    <property type="match status" value="1"/>
</dbReference>
<dbReference type="Pfam" id="PF04760">
    <property type="entry name" value="IF2_N"/>
    <property type="match status" value="2"/>
</dbReference>
<dbReference type="SUPFAM" id="SSF52156">
    <property type="entry name" value="Initiation factor IF2/eIF5b, domain 3"/>
    <property type="match status" value="1"/>
</dbReference>
<dbReference type="SUPFAM" id="SSF52540">
    <property type="entry name" value="P-loop containing nucleoside triphosphate hydrolases"/>
    <property type="match status" value="1"/>
</dbReference>
<dbReference type="SUPFAM" id="SSF50447">
    <property type="entry name" value="Translation proteins"/>
    <property type="match status" value="2"/>
</dbReference>
<dbReference type="PROSITE" id="PS51722">
    <property type="entry name" value="G_TR_2"/>
    <property type="match status" value="1"/>
</dbReference>
<dbReference type="PROSITE" id="PS01176">
    <property type="entry name" value="IF2"/>
    <property type="match status" value="1"/>
</dbReference>
<reference key="1">
    <citation type="journal article" date="2009" name="PLoS Pathog.">
        <title>Genomic evidence for the evolution of Streptococcus equi: host restriction, increased virulence, and genetic exchange with human pathogens.</title>
        <authorList>
            <person name="Holden M.T.G."/>
            <person name="Heather Z."/>
            <person name="Paillot R."/>
            <person name="Steward K.F."/>
            <person name="Webb K."/>
            <person name="Ainslie F."/>
            <person name="Jourdan T."/>
            <person name="Bason N.C."/>
            <person name="Holroyd N.E."/>
            <person name="Mungall K."/>
            <person name="Quail M.A."/>
            <person name="Sanders M."/>
            <person name="Simmonds M."/>
            <person name="Willey D."/>
            <person name="Brooks K."/>
            <person name="Aanensen D.M."/>
            <person name="Spratt B.G."/>
            <person name="Jolley K.A."/>
            <person name="Maiden M.C.J."/>
            <person name="Kehoe M."/>
            <person name="Chanter N."/>
            <person name="Bentley S.D."/>
            <person name="Robinson C."/>
            <person name="Maskell D.J."/>
            <person name="Parkhill J."/>
            <person name="Waller A.S."/>
        </authorList>
    </citation>
    <scope>NUCLEOTIDE SEQUENCE [LARGE SCALE GENOMIC DNA]</scope>
    <source>
        <strain>H70</strain>
    </source>
</reference>
<gene>
    <name evidence="2" type="primary">infB</name>
    <name type="ordered locus">SZO_15380</name>
</gene>
<accession>C0MDY5</accession>
<organism>
    <name type="scientific">Streptococcus equi subsp. zooepidemicus (strain H70)</name>
    <dbReference type="NCBI Taxonomy" id="553483"/>
    <lineage>
        <taxon>Bacteria</taxon>
        <taxon>Bacillati</taxon>
        <taxon>Bacillota</taxon>
        <taxon>Bacilli</taxon>
        <taxon>Lactobacillales</taxon>
        <taxon>Streptococcaceae</taxon>
        <taxon>Streptococcus</taxon>
    </lineage>
</organism>